<dbReference type="EMBL" id="AB025946">
    <property type="protein sequence ID" value="BAA82148.1"/>
    <property type="status" value="ALT_SEQ"/>
    <property type="molecule type" value="Genomic_DNA"/>
</dbReference>
<dbReference type="RefSeq" id="YP_003587856.1">
    <property type="nucleotide sequence ID" value="NC_014078.1"/>
</dbReference>
<dbReference type="KEGG" id="vg:9086618"/>
<dbReference type="Proteomes" id="UP000008259">
    <property type="component" value="Segment"/>
</dbReference>
<dbReference type="InterPro" id="IPR008474">
    <property type="entry name" value="DUF755"/>
</dbReference>
<dbReference type="InterPro" id="IPR004118">
    <property type="entry name" value="HEV_TT_vir_Orf2/Gyrovir_Vp2_N"/>
</dbReference>
<dbReference type="Pfam" id="PF05501">
    <property type="entry name" value="DUF755"/>
    <property type="match status" value="1"/>
</dbReference>
<dbReference type="Pfam" id="PF02957">
    <property type="entry name" value="TT_ORF2-like"/>
    <property type="match status" value="1"/>
</dbReference>
<keyword id="KW-0597">Phosphoprotein</keyword>
<keyword id="KW-1185">Reference proteome</keyword>
<proteinExistence type="inferred from homology"/>
<comment type="PTM">
    <text evidence="1">Phosphorylated at C-terminal serines.</text>
</comment>
<organism>
    <name type="scientific">Torque teno virus (isolate Human/Japan/SANBAN/1999)</name>
    <name type="common">TTV</name>
    <dbReference type="NCBI Taxonomy" id="486277"/>
    <lineage>
        <taxon>Viruses</taxon>
        <taxon>Viruses incertae sedis</taxon>
        <taxon>Anelloviridae</taxon>
        <taxon>Torque teno virus</taxon>
    </lineage>
</organism>
<evidence type="ECO:0000250" key="1"/>
<evidence type="ECO:0000256" key="2">
    <source>
        <dbReference type="SAM" id="MobiDB-lite"/>
    </source>
</evidence>
<protein>
    <recommendedName>
        <fullName>Probable protein VP2</fullName>
    </recommendedName>
    <alternativeName>
        <fullName>ORF2/3 protein</fullName>
    </alternativeName>
</protein>
<accession>Q9WSV8</accession>
<sequence length="271" mass="29242">MSWRPPVHDAPGIERNWYEACFRAHAGSCGCGNFIAHINLLAGRYGFTGGPPPPGGPPPGTPQVRASRNSPAAPQQPPALPWHGDGGEGGAAGPPGAGGDAAADAHLGDEELADLLDAIEDDAQCSNRRSKTRARRTDGPPTPIDTLEEYKWRTRNKWDPAGCSTPLTGEGAILARELSNACTRNLSTMKAILHNQKDLESFLQQRQQRESSESPKKAHIQRKKGRKPLQKSRRRRRQYSSSSDDSESSGSSSSSSNSSPEKCSKRKRVST</sequence>
<feature type="chain" id="PRO_0000315337" description="Probable protein VP2">
    <location>
        <begin position="1"/>
        <end position="271"/>
    </location>
</feature>
<feature type="region of interest" description="Disordered" evidence="2">
    <location>
        <begin position="49"/>
        <end position="103"/>
    </location>
</feature>
<feature type="region of interest" description="Disordered" evidence="2">
    <location>
        <begin position="124"/>
        <end position="146"/>
    </location>
</feature>
<feature type="region of interest" description="Disordered" evidence="2">
    <location>
        <begin position="203"/>
        <end position="271"/>
    </location>
</feature>
<feature type="compositionally biased region" description="Pro residues" evidence="2">
    <location>
        <begin position="50"/>
        <end position="61"/>
    </location>
</feature>
<feature type="compositionally biased region" description="Gly residues" evidence="2">
    <location>
        <begin position="87"/>
        <end position="99"/>
    </location>
</feature>
<feature type="compositionally biased region" description="Basic and acidic residues" evidence="2">
    <location>
        <begin position="207"/>
        <end position="216"/>
    </location>
</feature>
<feature type="compositionally biased region" description="Basic residues" evidence="2">
    <location>
        <begin position="217"/>
        <end position="238"/>
    </location>
</feature>
<feature type="compositionally biased region" description="Low complexity" evidence="2">
    <location>
        <begin position="239"/>
        <end position="259"/>
    </location>
</feature>
<gene>
    <name type="ORF">ORF2/3</name>
</gene>
<reference key="1">
    <citation type="journal article" date="1999" name="Virology">
        <title>Complete circular DNA genome of a TT virus variant (isolate name SANBAN) and 44 partial ORF2 sequences implicating a great degree of diversity beyond genotypes.</title>
        <authorList>
            <person name="Hijikata M."/>
            <person name="Takahashi K."/>
            <person name="Mishiro S."/>
        </authorList>
    </citation>
    <scope>NUCLEOTIDE SEQUENCE [GENOMIC DNA]</scope>
</reference>
<reference key="2">
    <citation type="journal article" date="2007" name="Rev. Med. Virol.">
        <title>Torque teno virus (TTV): current status.</title>
        <authorList>
            <person name="Hino S."/>
            <person name="Miyata H."/>
        </authorList>
    </citation>
    <scope>REVIEW</scope>
</reference>
<name>ORF23_TTVV5</name>
<organismHost>
    <name type="scientific">Homo sapiens</name>
    <name type="common">Human</name>
    <dbReference type="NCBI Taxonomy" id="9606"/>
</organismHost>